<sequence length="133" mass="15090">MWNDLAVYIIRCSGPGTRVVEVGAGRFLYVSDYIRKHSKVDLVLTDIKPSHGGIVRDDITSPRMEIYRGAALIYSIRPPAEIHSSLMRVADAVGARLIIKPLTGEDIVTERKMKLVNYGRTYFYEYIAEVRSR</sequence>
<dbReference type="EMBL" id="AE000666">
    <property type="protein sequence ID" value="AAB85479.1"/>
    <property type="molecule type" value="Genomic_DNA"/>
</dbReference>
<dbReference type="PIR" id="D69000">
    <property type="entry name" value="D69000"/>
</dbReference>
<dbReference type="RefSeq" id="WP_010876631.1">
    <property type="nucleotide sequence ID" value="NC_000916.1"/>
</dbReference>
<dbReference type="PDB" id="2K4M">
    <property type="method" value="NMR"/>
    <property type="chains" value="A=1-133"/>
</dbReference>
<dbReference type="PDBsum" id="2K4M"/>
<dbReference type="BMRB" id="O27081"/>
<dbReference type="SMR" id="O27081"/>
<dbReference type="STRING" id="187420.MTH_1000"/>
<dbReference type="PaxDb" id="187420-MTH_1000"/>
<dbReference type="EnsemblBacteria" id="AAB85479">
    <property type="protein sequence ID" value="AAB85479"/>
    <property type="gene ID" value="MTH_1000"/>
</dbReference>
<dbReference type="GeneID" id="1471408"/>
<dbReference type="KEGG" id="mth:MTH_1000"/>
<dbReference type="HOGENOM" id="CLU_148458_0_0_2"/>
<dbReference type="InParanoid" id="O27081"/>
<dbReference type="EvolutionaryTrace" id="O27081"/>
<dbReference type="Proteomes" id="UP000005223">
    <property type="component" value="Chromosome"/>
</dbReference>
<dbReference type="Gene3D" id="3.40.50.150">
    <property type="entry name" value="Vaccinia Virus protein VP39"/>
    <property type="match status" value="1"/>
</dbReference>
<dbReference type="HAMAP" id="MF_00341">
    <property type="entry name" value="UPF0146"/>
    <property type="match status" value="1"/>
</dbReference>
<dbReference type="InterPro" id="IPR029063">
    <property type="entry name" value="SAM-dependent_MTases_sf"/>
</dbReference>
<dbReference type="InterPro" id="IPR005353">
    <property type="entry name" value="UPF0146"/>
</dbReference>
<dbReference type="Pfam" id="PF03686">
    <property type="entry name" value="UPF0146"/>
    <property type="match status" value="1"/>
</dbReference>
<dbReference type="PIRSF" id="PIRSF016725">
    <property type="entry name" value="UCP016725"/>
    <property type="match status" value="1"/>
</dbReference>
<keyword id="KW-0002">3D-structure</keyword>
<keyword id="KW-1185">Reference proteome</keyword>
<comment type="similarity">
    <text evidence="1">Belongs to the UPF0146 family.</text>
</comment>
<organism>
    <name type="scientific">Methanothermobacter thermautotrophicus (strain ATCC 29096 / DSM 1053 / JCM 10044 / NBRC 100330 / Delta H)</name>
    <name type="common">Methanobacterium thermoautotrophicum</name>
    <dbReference type="NCBI Taxonomy" id="187420"/>
    <lineage>
        <taxon>Archaea</taxon>
        <taxon>Methanobacteriati</taxon>
        <taxon>Methanobacteriota</taxon>
        <taxon>Methanomada group</taxon>
        <taxon>Methanobacteria</taxon>
        <taxon>Methanobacteriales</taxon>
        <taxon>Methanobacteriaceae</taxon>
        <taxon>Methanothermobacter</taxon>
    </lineage>
</organism>
<proteinExistence type="evidence at protein level"/>
<feature type="chain" id="PRO_0000145095" description="UPF0146 protein MTH_1000">
    <location>
        <begin position="1"/>
        <end position="133"/>
    </location>
</feature>
<feature type="helix" evidence="2">
    <location>
        <begin position="1"/>
        <end position="12"/>
    </location>
</feature>
<feature type="strand" evidence="2">
    <location>
        <begin position="15"/>
        <end position="22"/>
    </location>
</feature>
<feature type="helix" evidence="2">
    <location>
        <begin position="29"/>
        <end position="37"/>
    </location>
</feature>
<feature type="strand" evidence="2">
    <location>
        <begin position="41"/>
        <end position="45"/>
    </location>
</feature>
<feature type="strand" evidence="2">
    <location>
        <begin position="59"/>
        <end position="61"/>
    </location>
</feature>
<feature type="helix" evidence="2">
    <location>
        <begin position="64"/>
        <end position="67"/>
    </location>
</feature>
<feature type="strand" evidence="2">
    <location>
        <begin position="70"/>
        <end position="77"/>
    </location>
</feature>
<feature type="helix" evidence="2">
    <location>
        <begin position="83"/>
        <end position="93"/>
    </location>
</feature>
<feature type="strand" evidence="2">
    <location>
        <begin position="96"/>
        <end position="100"/>
    </location>
</feature>
<feature type="strand" evidence="2">
    <location>
        <begin position="114"/>
        <end position="118"/>
    </location>
</feature>
<feature type="strand" evidence="2">
    <location>
        <begin position="121"/>
        <end position="127"/>
    </location>
</feature>
<evidence type="ECO:0000305" key="1"/>
<evidence type="ECO:0007829" key="2">
    <source>
        <dbReference type="PDB" id="2K4M"/>
    </source>
</evidence>
<reference key="1">
    <citation type="journal article" date="1997" name="J. Bacteriol.">
        <title>Complete genome sequence of Methanobacterium thermoautotrophicum deltaH: functional analysis and comparative genomics.</title>
        <authorList>
            <person name="Smith D.R."/>
            <person name="Doucette-Stamm L.A."/>
            <person name="Deloughery C."/>
            <person name="Lee H.-M."/>
            <person name="Dubois J."/>
            <person name="Aldredge T."/>
            <person name="Bashirzadeh R."/>
            <person name="Blakely D."/>
            <person name="Cook R."/>
            <person name="Gilbert K."/>
            <person name="Harrison D."/>
            <person name="Hoang L."/>
            <person name="Keagle P."/>
            <person name="Lumm W."/>
            <person name="Pothier B."/>
            <person name="Qiu D."/>
            <person name="Spadafora R."/>
            <person name="Vicare R."/>
            <person name="Wang Y."/>
            <person name="Wierzbowski J."/>
            <person name="Gibson R."/>
            <person name="Jiwani N."/>
            <person name="Caruso A."/>
            <person name="Bush D."/>
            <person name="Safer H."/>
            <person name="Patwell D."/>
            <person name="Prabhakar S."/>
            <person name="McDougall S."/>
            <person name="Shimer G."/>
            <person name="Goyal A."/>
            <person name="Pietrovski S."/>
            <person name="Church G.M."/>
            <person name="Daniels C.J."/>
            <person name="Mao J.-I."/>
            <person name="Rice P."/>
            <person name="Noelling J."/>
            <person name="Reeve J.N."/>
        </authorList>
    </citation>
    <scope>NUCLEOTIDE SEQUENCE [LARGE SCALE GENOMIC DNA]</scope>
    <source>
        <strain>ATCC 29096 / DSM 1053 / JCM 10044 / NBRC 100330 / Delta H</strain>
    </source>
</reference>
<name>YA00_METTH</name>
<gene>
    <name type="ordered locus">MTH_1000</name>
</gene>
<protein>
    <recommendedName>
        <fullName>UPF0146 protein MTH_1000</fullName>
    </recommendedName>
</protein>
<accession>O27081</accession>